<protein>
    <recommendedName>
        <fullName evidence="1">Dihydroorotate dehydrogenase (quinone)</fullName>
        <ecNumber evidence="1">1.3.5.2</ecNumber>
    </recommendedName>
    <alternativeName>
        <fullName evidence="1">DHOdehase</fullName>
        <shortName evidence="1">DHOD</shortName>
        <shortName evidence="1">DHODase</shortName>
    </alternativeName>
    <alternativeName>
        <fullName evidence="1">Dihydroorotate oxidase</fullName>
    </alternativeName>
</protein>
<feature type="chain" id="PRO_1000024168" description="Dihydroorotate dehydrogenase (quinone)">
    <location>
        <begin position="1"/>
        <end position="371"/>
    </location>
</feature>
<feature type="active site" description="Nucleophile" evidence="1">
    <location>
        <position position="192"/>
    </location>
</feature>
<feature type="binding site" evidence="1">
    <location>
        <begin position="79"/>
        <end position="83"/>
    </location>
    <ligand>
        <name>FMN</name>
        <dbReference type="ChEBI" id="CHEBI:58210"/>
    </ligand>
</feature>
<feature type="binding site" evidence="1">
    <location>
        <position position="83"/>
    </location>
    <ligand>
        <name>substrate</name>
    </ligand>
</feature>
<feature type="binding site" evidence="1">
    <location>
        <position position="103"/>
    </location>
    <ligand>
        <name>FMN</name>
        <dbReference type="ChEBI" id="CHEBI:58210"/>
    </ligand>
</feature>
<feature type="binding site" evidence="1">
    <location>
        <begin position="128"/>
        <end position="132"/>
    </location>
    <ligand>
        <name>substrate</name>
    </ligand>
</feature>
<feature type="binding site" evidence="1">
    <location>
        <position position="156"/>
    </location>
    <ligand>
        <name>FMN</name>
        <dbReference type="ChEBI" id="CHEBI:58210"/>
    </ligand>
</feature>
<feature type="binding site" evidence="1">
    <location>
        <position position="189"/>
    </location>
    <ligand>
        <name>FMN</name>
        <dbReference type="ChEBI" id="CHEBI:58210"/>
    </ligand>
</feature>
<feature type="binding site" evidence="1">
    <location>
        <position position="189"/>
    </location>
    <ligand>
        <name>substrate</name>
    </ligand>
</feature>
<feature type="binding site" evidence="1">
    <location>
        <position position="194"/>
    </location>
    <ligand>
        <name>substrate</name>
    </ligand>
</feature>
<feature type="binding site" evidence="1">
    <location>
        <position position="225"/>
    </location>
    <ligand>
        <name>FMN</name>
        <dbReference type="ChEBI" id="CHEBI:58210"/>
    </ligand>
</feature>
<feature type="binding site" evidence="1">
    <location>
        <position position="253"/>
    </location>
    <ligand>
        <name>FMN</name>
        <dbReference type="ChEBI" id="CHEBI:58210"/>
    </ligand>
</feature>
<feature type="binding site" evidence="1">
    <location>
        <begin position="254"/>
        <end position="255"/>
    </location>
    <ligand>
        <name>substrate</name>
    </ligand>
</feature>
<feature type="binding site" evidence="1">
    <location>
        <position position="279"/>
    </location>
    <ligand>
        <name>FMN</name>
        <dbReference type="ChEBI" id="CHEBI:58210"/>
    </ligand>
</feature>
<feature type="binding site" evidence="1">
    <location>
        <position position="308"/>
    </location>
    <ligand>
        <name>FMN</name>
        <dbReference type="ChEBI" id="CHEBI:58210"/>
    </ligand>
</feature>
<feature type="binding site" evidence="1">
    <location>
        <begin position="329"/>
        <end position="330"/>
    </location>
    <ligand>
        <name>FMN</name>
        <dbReference type="ChEBI" id="CHEBI:58210"/>
    </ligand>
</feature>
<gene>
    <name evidence="1" type="primary">pyrD</name>
    <name type="ordered locus">cgR_1578</name>
</gene>
<evidence type="ECO:0000255" key="1">
    <source>
        <dbReference type="HAMAP-Rule" id="MF_00225"/>
    </source>
</evidence>
<accession>A4QEA4</accession>
<name>PYRD_CORGB</name>
<proteinExistence type="inferred from homology"/>
<keyword id="KW-1003">Cell membrane</keyword>
<keyword id="KW-0285">Flavoprotein</keyword>
<keyword id="KW-0288">FMN</keyword>
<keyword id="KW-0472">Membrane</keyword>
<keyword id="KW-0560">Oxidoreductase</keyword>
<keyword id="KW-0665">Pyrimidine biosynthesis</keyword>
<dbReference type="EC" id="1.3.5.2" evidence="1"/>
<dbReference type="EMBL" id="AP009044">
    <property type="protein sequence ID" value="BAF54570.1"/>
    <property type="molecule type" value="Genomic_DNA"/>
</dbReference>
<dbReference type="RefSeq" id="WP_011897269.1">
    <property type="nucleotide sequence ID" value="NC_009342.1"/>
</dbReference>
<dbReference type="SMR" id="A4QEA4"/>
<dbReference type="KEGG" id="cgt:cgR_1578"/>
<dbReference type="HOGENOM" id="CLU_013640_2_0_11"/>
<dbReference type="PhylomeDB" id="A4QEA4"/>
<dbReference type="UniPathway" id="UPA00070">
    <property type="reaction ID" value="UER00946"/>
</dbReference>
<dbReference type="Proteomes" id="UP000006698">
    <property type="component" value="Chromosome"/>
</dbReference>
<dbReference type="GO" id="GO:0005737">
    <property type="term" value="C:cytoplasm"/>
    <property type="evidence" value="ECO:0007669"/>
    <property type="project" value="InterPro"/>
</dbReference>
<dbReference type="GO" id="GO:0005886">
    <property type="term" value="C:plasma membrane"/>
    <property type="evidence" value="ECO:0007669"/>
    <property type="project" value="UniProtKB-SubCell"/>
</dbReference>
<dbReference type="GO" id="GO:0106430">
    <property type="term" value="F:dihydroorotate dehydrogenase (quinone) activity"/>
    <property type="evidence" value="ECO:0007669"/>
    <property type="project" value="UniProtKB-EC"/>
</dbReference>
<dbReference type="GO" id="GO:0006207">
    <property type="term" value="P:'de novo' pyrimidine nucleobase biosynthetic process"/>
    <property type="evidence" value="ECO:0007669"/>
    <property type="project" value="InterPro"/>
</dbReference>
<dbReference type="GO" id="GO:0044205">
    <property type="term" value="P:'de novo' UMP biosynthetic process"/>
    <property type="evidence" value="ECO:0007669"/>
    <property type="project" value="UniProtKB-UniRule"/>
</dbReference>
<dbReference type="CDD" id="cd04738">
    <property type="entry name" value="DHOD_2_like"/>
    <property type="match status" value="1"/>
</dbReference>
<dbReference type="FunFam" id="3.20.20.70:FF:000123">
    <property type="entry name" value="Dihydroorotate dehydrogenase (quinone)"/>
    <property type="match status" value="1"/>
</dbReference>
<dbReference type="Gene3D" id="3.20.20.70">
    <property type="entry name" value="Aldolase class I"/>
    <property type="match status" value="1"/>
</dbReference>
<dbReference type="HAMAP" id="MF_00225">
    <property type="entry name" value="DHO_dh_type2"/>
    <property type="match status" value="1"/>
</dbReference>
<dbReference type="InterPro" id="IPR013785">
    <property type="entry name" value="Aldolase_TIM"/>
</dbReference>
<dbReference type="InterPro" id="IPR050074">
    <property type="entry name" value="DHO_dehydrogenase"/>
</dbReference>
<dbReference type="InterPro" id="IPR005719">
    <property type="entry name" value="Dihydroorotate_DH_2"/>
</dbReference>
<dbReference type="InterPro" id="IPR005720">
    <property type="entry name" value="Dihydroorotate_DH_cat"/>
</dbReference>
<dbReference type="InterPro" id="IPR001295">
    <property type="entry name" value="Dihydroorotate_DH_CS"/>
</dbReference>
<dbReference type="NCBIfam" id="NF003648">
    <property type="entry name" value="PRK05286.2-1"/>
    <property type="match status" value="1"/>
</dbReference>
<dbReference type="NCBIfam" id="NF003652">
    <property type="entry name" value="PRK05286.2-5"/>
    <property type="match status" value="1"/>
</dbReference>
<dbReference type="NCBIfam" id="TIGR01036">
    <property type="entry name" value="pyrD_sub2"/>
    <property type="match status" value="1"/>
</dbReference>
<dbReference type="PANTHER" id="PTHR48109:SF4">
    <property type="entry name" value="DIHYDROOROTATE DEHYDROGENASE (QUINONE), MITOCHONDRIAL"/>
    <property type="match status" value="1"/>
</dbReference>
<dbReference type="PANTHER" id="PTHR48109">
    <property type="entry name" value="DIHYDROOROTATE DEHYDROGENASE (QUINONE), MITOCHONDRIAL-RELATED"/>
    <property type="match status" value="1"/>
</dbReference>
<dbReference type="Pfam" id="PF01180">
    <property type="entry name" value="DHO_dh"/>
    <property type="match status" value="1"/>
</dbReference>
<dbReference type="SUPFAM" id="SSF51395">
    <property type="entry name" value="FMN-linked oxidoreductases"/>
    <property type="match status" value="1"/>
</dbReference>
<dbReference type="PROSITE" id="PS00911">
    <property type="entry name" value="DHODEHASE_1"/>
    <property type="match status" value="1"/>
</dbReference>
<dbReference type="PROSITE" id="PS00912">
    <property type="entry name" value="DHODEHASE_2"/>
    <property type="match status" value="1"/>
</dbReference>
<comment type="function">
    <text evidence="1">Catalyzes the conversion of dihydroorotate to orotate with quinone as electron acceptor.</text>
</comment>
<comment type="catalytic activity">
    <reaction evidence="1">
        <text>(S)-dihydroorotate + a quinone = orotate + a quinol</text>
        <dbReference type="Rhea" id="RHEA:30187"/>
        <dbReference type="ChEBI" id="CHEBI:24646"/>
        <dbReference type="ChEBI" id="CHEBI:30839"/>
        <dbReference type="ChEBI" id="CHEBI:30864"/>
        <dbReference type="ChEBI" id="CHEBI:132124"/>
        <dbReference type="EC" id="1.3.5.2"/>
    </reaction>
</comment>
<comment type="cofactor">
    <cofactor evidence="1">
        <name>FMN</name>
        <dbReference type="ChEBI" id="CHEBI:58210"/>
    </cofactor>
    <text evidence="1">Binds 1 FMN per subunit.</text>
</comment>
<comment type="pathway">
    <text evidence="1">Pyrimidine metabolism; UMP biosynthesis via de novo pathway; orotate from (S)-dihydroorotate (quinone route): step 1/1.</text>
</comment>
<comment type="subunit">
    <text evidence="1">Monomer.</text>
</comment>
<comment type="subcellular location">
    <subcellularLocation>
        <location evidence="1">Cell membrane</location>
        <topology evidence="1">Peripheral membrane protein</topology>
    </subcellularLocation>
</comment>
<comment type="similarity">
    <text evidence="1">Belongs to the dihydroorotate dehydrogenase family. Type 2 subfamily.</text>
</comment>
<reference key="1">
    <citation type="journal article" date="2007" name="Microbiology">
        <title>Comparative analysis of the Corynebacterium glutamicum group and complete genome sequence of strain R.</title>
        <authorList>
            <person name="Yukawa H."/>
            <person name="Omumasaba C.A."/>
            <person name="Nonaka H."/>
            <person name="Kos P."/>
            <person name="Okai N."/>
            <person name="Suzuki N."/>
            <person name="Suda M."/>
            <person name="Tsuge Y."/>
            <person name="Watanabe J."/>
            <person name="Ikeda Y."/>
            <person name="Vertes A.A."/>
            <person name="Inui M."/>
        </authorList>
    </citation>
    <scope>NUCLEOTIDE SEQUENCE [LARGE SCALE GENOMIC DNA]</scope>
    <source>
        <strain>R</strain>
    </source>
</reference>
<organism>
    <name type="scientific">Corynebacterium glutamicum (strain R)</name>
    <dbReference type="NCBI Taxonomy" id="340322"/>
    <lineage>
        <taxon>Bacteria</taxon>
        <taxon>Bacillati</taxon>
        <taxon>Actinomycetota</taxon>
        <taxon>Actinomycetes</taxon>
        <taxon>Mycobacteriales</taxon>
        <taxon>Corynebacteriaceae</taxon>
        <taxon>Corynebacterium</taxon>
    </lineage>
</organism>
<sequence>MSKQSPTRKLRQTVYDASLKVMFTLRPERIHGLMNKALGVVDGVAPLNRTMEKIIAVHDDSLSQEVFGVTFPRPLGLAAGFDKNASMADAWGAVGFGYAELGTVTASPQPGNPTPRLFRLPADKAILNRMGFNNLGAAEVATNLSNRKSTDVIGINIGKTKVVPAEHAVDDYRRSASLLGDLADYLVVNVSSPNTPGLRDLQAVESLRPILAAVQESTTVPVLVKIAPDLSDEDIDAVADLAVELKLAGIVATNTTISREGLNTPAGEVEAMGAGGISGAPVAARSLEVLKRLYARVGKEMVLISVGGISTPEQAWERITSGATLLQGYTPFIYGGPDWIRDIHLGIAKQLKAHGLRNIADAVGSELEWKN</sequence>